<sequence length="233" mass="25560">MLTRKQYELLRFINERLKESGVPPSFDEMKDALDLRSKSGIHRLITALEERGFIRRLPNRARAIEVIKLPEVAGNGGGRRGFTPSVIEGNLGKVRPSGGGVVDDAERPVAVPVMGRIAAGTPIEALQTRSHTISVPPDMLGSGEHYALEVRGDSMVEAGILDGDMALIQRNETAETGDIVVALIDDEEATLKRFRRRGASIALEPANTAYEVRILPPNRVQIQGKLIGIYRKY</sequence>
<accession>Q1QMK3</accession>
<dbReference type="EC" id="3.4.21.88" evidence="1"/>
<dbReference type="EMBL" id="CP000319">
    <property type="protein sequence ID" value="ABE62544.1"/>
    <property type="molecule type" value="Genomic_DNA"/>
</dbReference>
<dbReference type="RefSeq" id="WP_011510226.1">
    <property type="nucleotide sequence ID" value="NC_007964.1"/>
</dbReference>
<dbReference type="SMR" id="Q1QMK3"/>
<dbReference type="STRING" id="323097.Nham_1729"/>
<dbReference type="MEROPS" id="S24.001"/>
<dbReference type="KEGG" id="nha:Nham_1729"/>
<dbReference type="eggNOG" id="COG1974">
    <property type="taxonomic scope" value="Bacteria"/>
</dbReference>
<dbReference type="HOGENOM" id="CLU_066192_45_2_5"/>
<dbReference type="OrthoDB" id="9802364at2"/>
<dbReference type="Proteomes" id="UP000001953">
    <property type="component" value="Chromosome"/>
</dbReference>
<dbReference type="GO" id="GO:0003677">
    <property type="term" value="F:DNA binding"/>
    <property type="evidence" value="ECO:0007669"/>
    <property type="project" value="UniProtKB-UniRule"/>
</dbReference>
<dbReference type="GO" id="GO:0004252">
    <property type="term" value="F:serine-type endopeptidase activity"/>
    <property type="evidence" value="ECO:0007669"/>
    <property type="project" value="UniProtKB-UniRule"/>
</dbReference>
<dbReference type="GO" id="GO:0006281">
    <property type="term" value="P:DNA repair"/>
    <property type="evidence" value="ECO:0007669"/>
    <property type="project" value="UniProtKB-UniRule"/>
</dbReference>
<dbReference type="GO" id="GO:0006260">
    <property type="term" value="P:DNA replication"/>
    <property type="evidence" value="ECO:0007669"/>
    <property type="project" value="UniProtKB-UniRule"/>
</dbReference>
<dbReference type="GO" id="GO:0045892">
    <property type="term" value="P:negative regulation of DNA-templated transcription"/>
    <property type="evidence" value="ECO:0007669"/>
    <property type="project" value="UniProtKB-UniRule"/>
</dbReference>
<dbReference type="GO" id="GO:0006508">
    <property type="term" value="P:proteolysis"/>
    <property type="evidence" value="ECO:0007669"/>
    <property type="project" value="InterPro"/>
</dbReference>
<dbReference type="GO" id="GO:0009432">
    <property type="term" value="P:SOS response"/>
    <property type="evidence" value="ECO:0007669"/>
    <property type="project" value="UniProtKB-UniRule"/>
</dbReference>
<dbReference type="CDD" id="cd06529">
    <property type="entry name" value="S24_LexA-like"/>
    <property type="match status" value="1"/>
</dbReference>
<dbReference type="FunFam" id="1.10.10.10:FF:000102">
    <property type="entry name" value="LexA repressor"/>
    <property type="match status" value="1"/>
</dbReference>
<dbReference type="FunFam" id="2.10.109.10:FF:000001">
    <property type="entry name" value="LexA repressor"/>
    <property type="match status" value="1"/>
</dbReference>
<dbReference type="Gene3D" id="2.10.109.10">
    <property type="entry name" value="Umud Fragment, subunit A"/>
    <property type="match status" value="1"/>
</dbReference>
<dbReference type="Gene3D" id="1.10.10.10">
    <property type="entry name" value="Winged helix-like DNA-binding domain superfamily/Winged helix DNA-binding domain"/>
    <property type="match status" value="1"/>
</dbReference>
<dbReference type="HAMAP" id="MF_00015">
    <property type="entry name" value="LexA"/>
    <property type="match status" value="1"/>
</dbReference>
<dbReference type="InterPro" id="IPR006200">
    <property type="entry name" value="LexA"/>
</dbReference>
<dbReference type="InterPro" id="IPR039418">
    <property type="entry name" value="LexA-like"/>
</dbReference>
<dbReference type="InterPro" id="IPR036286">
    <property type="entry name" value="LexA/Signal_pep-like_sf"/>
</dbReference>
<dbReference type="InterPro" id="IPR006199">
    <property type="entry name" value="LexA_DNA-bd_dom"/>
</dbReference>
<dbReference type="InterPro" id="IPR050077">
    <property type="entry name" value="LexA_repressor"/>
</dbReference>
<dbReference type="InterPro" id="IPR006197">
    <property type="entry name" value="Peptidase_S24_LexA"/>
</dbReference>
<dbReference type="InterPro" id="IPR015927">
    <property type="entry name" value="Peptidase_S24_S26A/B/C"/>
</dbReference>
<dbReference type="InterPro" id="IPR036388">
    <property type="entry name" value="WH-like_DNA-bd_sf"/>
</dbReference>
<dbReference type="InterPro" id="IPR036390">
    <property type="entry name" value="WH_DNA-bd_sf"/>
</dbReference>
<dbReference type="NCBIfam" id="TIGR00498">
    <property type="entry name" value="lexA"/>
    <property type="match status" value="1"/>
</dbReference>
<dbReference type="PANTHER" id="PTHR33516">
    <property type="entry name" value="LEXA REPRESSOR"/>
    <property type="match status" value="1"/>
</dbReference>
<dbReference type="PANTHER" id="PTHR33516:SF2">
    <property type="entry name" value="LEXA REPRESSOR-RELATED"/>
    <property type="match status" value="1"/>
</dbReference>
<dbReference type="Pfam" id="PF01726">
    <property type="entry name" value="LexA_DNA_bind"/>
    <property type="match status" value="1"/>
</dbReference>
<dbReference type="Pfam" id="PF00717">
    <property type="entry name" value="Peptidase_S24"/>
    <property type="match status" value="1"/>
</dbReference>
<dbReference type="PRINTS" id="PR00726">
    <property type="entry name" value="LEXASERPTASE"/>
</dbReference>
<dbReference type="SUPFAM" id="SSF51306">
    <property type="entry name" value="LexA/Signal peptidase"/>
    <property type="match status" value="1"/>
</dbReference>
<dbReference type="SUPFAM" id="SSF46785">
    <property type="entry name" value="Winged helix' DNA-binding domain"/>
    <property type="match status" value="1"/>
</dbReference>
<organism>
    <name type="scientific">Nitrobacter hamburgensis (strain DSM 10229 / NCIMB 13809 / X14)</name>
    <dbReference type="NCBI Taxonomy" id="323097"/>
    <lineage>
        <taxon>Bacteria</taxon>
        <taxon>Pseudomonadati</taxon>
        <taxon>Pseudomonadota</taxon>
        <taxon>Alphaproteobacteria</taxon>
        <taxon>Hyphomicrobiales</taxon>
        <taxon>Nitrobacteraceae</taxon>
        <taxon>Nitrobacter</taxon>
    </lineage>
</organism>
<evidence type="ECO:0000255" key="1">
    <source>
        <dbReference type="HAMAP-Rule" id="MF_00015"/>
    </source>
</evidence>
<protein>
    <recommendedName>
        <fullName evidence="1">LexA repressor</fullName>
        <ecNumber evidence="1">3.4.21.88</ecNumber>
    </recommendedName>
</protein>
<comment type="function">
    <text evidence="1">Represses a number of genes involved in the response to DNA damage (SOS response), including recA and lexA. In the presence of single-stranded DNA, RecA interacts with LexA causing an autocatalytic cleavage which disrupts the DNA-binding part of LexA, leading to derepression of the SOS regulon and eventually DNA repair.</text>
</comment>
<comment type="catalytic activity">
    <reaction evidence="1">
        <text>Hydrolysis of Ala-|-Gly bond in repressor LexA.</text>
        <dbReference type="EC" id="3.4.21.88"/>
    </reaction>
</comment>
<comment type="subunit">
    <text evidence="1">Homodimer.</text>
</comment>
<comment type="similarity">
    <text evidence="1">Belongs to the peptidase S24 family.</text>
</comment>
<feature type="chain" id="PRO_1000001308" description="LexA repressor">
    <location>
        <begin position="1"/>
        <end position="233"/>
    </location>
</feature>
<feature type="DNA-binding region" description="H-T-H motif" evidence="1">
    <location>
        <begin position="26"/>
        <end position="46"/>
    </location>
</feature>
<feature type="active site" description="For autocatalytic cleavage activity" evidence="1">
    <location>
        <position position="154"/>
    </location>
</feature>
<feature type="active site" description="For autocatalytic cleavage activity" evidence="1">
    <location>
        <position position="192"/>
    </location>
</feature>
<feature type="site" description="Cleavage; by autolysis" evidence="1">
    <location>
        <begin position="119"/>
        <end position="120"/>
    </location>
</feature>
<name>LEXA_NITHX</name>
<proteinExistence type="inferred from homology"/>
<keyword id="KW-0068">Autocatalytic cleavage</keyword>
<keyword id="KW-0227">DNA damage</keyword>
<keyword id="KW-0234">DNA repair</keyword>
<keyword id="KW-0235">DNA replication</keyword>
<keyword id="KW-0238">DNA-binding</keyword>
<keyword id="KW-0378">Hydrolase</keyword>
<keyword id="KW-1185">Reference proteome</keyword>
<keyword id="KW-0678">Repressor</keyword>
<keyword id="KW-0742">SOS response</keyword>
<keyword id="KW-0804">Transcription</keyword>
<keyword id="KW-0805">Transcription regulation</keyword>
<gene>
    <name evidence="1" type="primary">lexA</name>
    <name type="ordered locus">Nham_1729</name>
</gene>
<reference key="1">
    <citation type="submission" date="2006-03" db="EMBL/GenBank/DDBJ databases">
        <title>Complete sequence of chromosome of Nitrobacter hamburgensis X14.</title>
        <authorList>
            <consortium name="US DOE Joint Genome Institute"/>
            <person name="Copeland A."/>
            <person name="Lucas S."/>
            <person name="Lapidus A."/>
            <person name="Barry K."/>
            <person name="Detter J.C."/>
            <person name="Glavina del Rio T."/>
            <person name="Hammon N."/>
            <person name="Israni S."/>
            <person name="Dalin E."/>
            <person name="Tice H."/>
            <person name="Pitluck S."/>
            <person name="Chain P."/>
            <person name="Malfatti S."/>
            <person name="Shin M."/>
            <person name="Vergez L."/>
            <person name="Schmutz J."/>
            <person name="Larimer F."/>
            <person name="Land M."/>
            <person name="Hauser L."/>
            <person name="Kyrpides N."/>
            <person name="Ivanova N."/>
            <person name="Ward B."/>
            <person name="Arp D."/>
            <person name="Klotz M."/>
            <person name="Stein L."/>
            <person name="O'Mullan G."/>
            <person name="Starkenburg S."/>
            <person name="Sayavedra L."/>
            <person name="Poret-Peterson A.T."/>
            <person name="Gentry M.E."/>
            <person name="Bruce D."/>
            <person name="Richardson P."/>
        </authorList>
    </citation>
    <scope>NUCLEOTIDE SEQUENCE [LARGE SCALE GENOMIC DNA]</scope>
    <source>
        <strain>DSM 10229 / NCIMB 13809 / X14</strain>
    </source>
</reference>